<feature type="chain" id="PRO_0000073738" description="Flagellar calcium-binding protein">
    <location>
        <begin position="1"/>
        <end position="211"/>
    </location>
</feature>
<feature type="domain" description="EF-hand 1" evidence="1">
    <location>
        <begin position="45"/>
        <end position="80"/>
    </location>
</feature>
<feature type="domain" description="EF-hand 2" evidence="5">
    <location>
        <begin position="81"/>
        <end position="116"/>
    </location>
</feature>
<feature type="domain" description="EF-hand 3" evidence="1">
    <location>
        <begin position="127"/>
        <end position="162"/>
    </location>
</feature>
<feature type="domain" description="EF-hand 4" evidence="1">
    <location>
        <begin position="164"/>
        <end position="199"/>
    </location>
</feature>
<feature type="region of interest" description="Disordered" evidence="2">
    <location>
        <begin position="1"/>
        <end position="29"/>
    </location>
</feature>
<feature type="compositionally biased region" description="Basic and acidic residues" evidence="2">
    <location>
        <begin position="15"/>
        <end position="29"/>
    </location>
</feature>
<feature type="binding site" evidence="1">
    <location>
        <position position="58"/>
    </location>
    <ligand>
        <name>Ca(2+)</name>
        <dbReference type="ChEBI" id="CHEBI:29108"/>
        <label>1</label>
    </ligand>
</feature>
<feature type="binding site" evidence="1">
    <location>
        <position position="60"/>
    </location>
    <ligand>
        <name>Ca(2+)</name>
        <dbReference type="ChEBI" id="CHEBI:29108"/>
        <label>1</label>
    </ligand>
</feature>
<feature type="binding site" evidence="1">
    <location>
        <position position="62"/>
    </location>
    <ligand>
        <name>Ca(2+)</name>
        <dbReference type="ChEBI" id="CHEBI:29108"/>
        <label>1</label>
    </ligand>
</feature>
<feature type="binding site" evidence="1">
    <location>
        <position position="64"/>
    </location>
    <ligand>
        <name>Ca(2+)</name>
        <dbReference type="ChEBI" id="CHEBI:29108"/>
        <label>1</label>
    </ligand>
</feature>
<feature type="binding site" evidence="1">
    <location>
        <position position="69"/>
    </location>
    <ligand>
        <name>Ca(2+)</name>
        <dbReference type="ChEBI" id="CHEBI:29108"/>
        <label>1</label>
    </ligand>
</feature>
<feature type="binding site" evidence="5">
    <location>
        <position position="140"/>
    </location>
    <ligand>
        <name>Ca(2+)</name>
        <dbReference type="ChEBI" id="CHEBI:29108"/>
        <label>2</label>
    </ligand>
</feature>
<feature type="binding site" evidence="5">
    <location>
        <position position="142"/>
    </location>
    <ligand>
        <name>Ca(2+)</name>
        <dbReference type="ChEBI" id="CHEBI:29108"/>
        <label>2</label>
    </ligand>
</feature>
<feature type="binding site" evidence="5">
    <location>
        <position position="144"/>
    </location>
    <ligand>
        <name>Ca(2+)</name>
        <dbReference type="ChEBI" id="CHEBI:29108"/>
        <label>2</label>
    </ligand>
</feature>
<feature type="binding site" evidence="5">
    <location>
        <position position="151"/>
    </location>
    <ligand>
        <name>Ca(2+)</name>
        <dbReference type="ChEBI" id="CHEBI:29108"/>
        <label>2</label>
    </ligand>
</feature>
<feature type="binding site" evidence="1">
    <location>
        <position position="177"/>
    </location>
    <ligand>
        <name>Ca(2+)</name>
        <dbReference type="ChEBI" id="CHEBI:29108"/>
        <label>3</label>
    </ligand>
</feature>
<feature type="binding site" evidence="1">
    <location>
        <position position="179"/>
    </location>
    <ligand>
        <name>Ca(2+)</name>
        <dbReference type="ChEBI" id="CHEBI:29108"/>
        <label>3</label>
    </ligand>
</feature>
<feature type="binding site" evidence="1">
    <location>
        <position position="181"/>
    </location>
    <ligand>
        <name>Ca(2+)</name>
        <dbReference type="ChEBI" id="CHEBI:29108"/>
        <label>3</label>
    </ligand>
</feature>
<feature type="binding site" evidence="1">
    <location>
        <position position="183"/>
    </location>
    <ligand>
        <name>Ca(2+)</name>
        <dbReference type="ChEBI" id="CHEBI:29108"/>
        <label>3</label>
    </ligand>
</feature>
<feature type="binding site" evidence="1">
    <location>
        <position position="188"/>
    </location>
    <ligand>
        <name>Ca(2+)</name>
        <dbReference type="ChEBI" id="CHEBI:29108"/>
        <label>3</label>
    </ligand>
</feature>
<feature type="sequence variant" description="In strain: Miranda, PBOL and DM28C." evidence="3 4">
    <original>K</original>
    <variation>N</variation>
    <location>
        <position position="23"/>
    </location>
</feature>
<feature type="sequence variant" description="In strain: DM28C.">
    <original>R</original>
    <variation>P</variation>
    <location>
        <position position="33"/>
    </location>
</feature>
<feature type="sequence variant" description="In strain: Miranda, PBOL and DM28C.">
    <original>H</original>
    <variation>Y</variation>
    <location>
        <position position="71"/>
    </location>
</feature>
<feature type="sequence variant" description="In strain: DM28C.">
    <original>K</original>
    <variation>R</variation>
    <location>
        <position position="79"/>
    </location>
</feature>
<feature type="sequence variant" description="In strain: PBOL and DM28C.">
    <original>P</original>
    <variation>S</variation>
    <location>
        <position position="85"/>
    </location>
</feature>
<feature type="sequence variant" description="In strain: DM28C.">
    <original>R</original>
    <variation>G</variation>
    <location>
        <position position="86"/>
    </location>
</feature>
<feature type="sequence variant" description="In strain: PBOL.">
    <original>A</original>
    <variation>S</variation>
    <location>
        <position position="98"/>
    </location>
</feature>
<feature type="sequence variant" description="In strain: PBOL.">
    <original>A</original>
    <variation>T</variation>
    <location>
        <position position="100"/>
    </location>
</feature>
<feature type="sequence variant" description="In strain: Miranda.">
    <original>A</original>
    <variation>V</variation>
    <location>
        <position position="100"/>
    </location>
</feature>
<feature type="sequence variant" description="In strain: Miranda, DM28C and PBOL." evidence="4">
    <original>L</original>
    <variation>F</variation>
    <location>
        <position position="152"/>
    </location>
</feature>
<feature type="sequence variant" description="In strain: Miranda.">
    <original>S</original>
    <variation>K</variation>
    <location>
        <position position="210"/>
    </location>
</feature>
<feature type="sequence conflict" description="In Ref. 6; BAA13411." evidence="5" ref="6">
    <original>A</original>
    <variation>G</variation>
    <location>
        <position position="3"/>
    </location>
</feature>
<feature type="helix" evidence="6">
    <location>
        <begin position="24"/>
        <end position="37"/>
    </location>
</feature>
<feature type="strand" evidence="6">
    <location>
        <begin position="41"/>
        <end position="43"/>
    </location>
</feature>
<feature type="helix" evidence="6">
    <location>
        <begin position="44"/>
        <end position="57"/>
    </location>
</feature>
<feature type="helix" evidence="6">
    <location>
        <begin position="67"/>
        <end position="76"/>
    </location>
</feature>
<feature type="helix" evidence="6">
    <location>
        <begin position="80"/>
        <end position="82"/>
    </location>
</feature>
<feature type="helix" evidence="6">
    <location>
        <begin position="87"/>
        <end position="106"/>
    </location>
</feature>
<feature type="strand" evidence="6">
    <location>
        <begin position="112"/>
        <end position="114"/>
    </location>
</feature>
<feature type="helix" evidence="6">
    <location>
        <begin position="116"/>
        <end position="137"/>
    </location>
</feature>
<feature type="strand" evidence="6">
    <location>
        <begin position="141"/>
        <end position="148"/>
    </location>
</feature>
<feature type="helix" evidence="6">
    <location>
        <begin position="149"/>
        <end position="162"/>
    </location>
</feature>
<feature type="helix" evidence="6">
    <location>
        <begin position="169"/>
        <end position="176"/>
    </location>
</feature>
<feature type="strand" evidence="6">
    <location>
        <begin position="180"/>
        <end position="185"/>
    </location>
</feature>
<feature type="helix" evidence="6">
    <location>
        <begin position="186"/>
        <end position="201"/>
    </location>
</feature>
<comment type="function">
    <text>May contribute to the rapid motility of the trypanosomes, playing a role either in flagellar structure or in calcium metabolism. Could alternate between a GDP-bound inactive form to a calcium/GTP-bound active form.</text>
</comment>
<comment type="subcellular location">
    <subcellularLocation>
        <location>Cell projection</location>
        <location>Cilium</location>
        <location>Flagellum</location>
    </subcellularLocation>
</comment>
<comment type="domain">
    <text>This protein has four EF-hand domains, three of which may be functional calcium-binding sites.</text>
</comment>
<comment type="similarity">
    <text evidence="5">Belongs to the calflagin family.</text>
</comment>
<dbReference type="EMBL" id="X02838">
    <property type="protein sequence ID" value="CAA26599.1"/>
    <property type="molecule type" value="Genomic_DNA"/>
</dbReference>
<dbReference type="EMBL" id="S43664">
    <property type="protein sequence ID" value="AAB23113.2"/>
    <property type="molecule type" value="mRNA"/>
</dbReference>
<dbReference type="EMBL" id="Z54193">
    <property type="protein sequence ID" value="CAA90898.1"/>
    <property type="molecule type" value="Genomic_DNA"/>
</dbReference>
<dbReference type="EMBL" id="L26971">
    <property type="protein sequence ID" value="AAA99985.1"/>
    <property type="molecule type" value="mRNA"/>
</dbReference>
<dbReference type="EMBL" id="D87512">
    <property type="protein sequence ID" value="BAA13411.1"/>
    <property type="molecule type" value="mRNA"/>
</dbReference>
<dbReference type="EMBL" id="U70035">
    <property type="protein sequence ID" value="AAB08762.1"/>
    <property type="molecule type" value="mRNA"/>
</dbReference>
<dbReference type="PIR" id="A34311">
    <property type="entry name" value="A34311"/>
</dbReference>
<dbReference type="PDB" id="3CS1">
    <property type="method" value="X-ray"/>
    <property type="resolution" value="2.00 A"/>
    <property type="chains" value="A=1-211"/>
</dbReference>
<dbReference type="PDBsum" id="3CS1"/>
<dbReference type="SMR" id="P07749"/>
<dbReference type="KEGG" id="tcr:509391.10"/>
<dbReference type="KEGG" id="tcr:509391.20"/>
<dbReference type="KEGG" id="tcr:509391.30"/>
<dbReference type="VEuPathDB" id="TriTrypDB:BCY84_22754"/>
<dbReference type="VEuPathDB" id="TriTrypDB:C3747_6g496"/>
<dbReference type="VEuPathDB" id="TriTrypDB:C4B63_35g78"/>
<dbReference type="VEuPathDB" id="TriTrypDB:ECC02_003350"/>
<dbReference type="VEuPathDB" id="TriTrypDB:Tc_MARK_784"/>
<dbReference type="VEuPathDB" id="TriTrypDB:TcBrA4_0006360"/>
<dbReference type="VEuPathDB" id="TriTrypDB:TcCL_ESM00363"/>
<dbReference type="VEuPathDB" id="TriTrypDB:TcCLB.507491.151"/>
<dbReference type="VEuPathDB" id="TriTrypDB:TcCLB.509391.30"/>
<dbReference type="VEuPathDB" id="TriTrypDB:TCDM_08082"/>
<dbReference type="VEuPathDB" id="TriTrypDB:TcG_08330"/>
<dbReference type="VEuPathDB" id="TriTrypDB:TCSYLVIO_010035"/>
<dbReference type="VEuPathDB" id="TriTrypDB:TcYC6_0054930"/>
<dbReference type="EvolutionaryTrace" id="P07749"/>
<dbReference type="GO" id="GO:0031514">
    <property type="term" value="C:motile cilium"/>
    <property type="evidence" value="ECO:0007669"/>
    <property type="project" value="UniProtKB-SubCell"/>
</dbReference>
<dbReference type="GO" id="GO:0005509">
    <property type="term" value="F:calcium ion binding"/>
    <property type="evidence" value="ECO:0007669"/>
    <property type="project" value="InterPro"/>
</dbReference>
<dbReference type="CDD" id="cd00051">
    <property type="entry name" value="EFh"/>
    <property type="match status" value="1"/>
</dbReference>
<dbReference type="DisProt" id="DP02940"/>
<dbReference type="Gene3D" id="1.10.238.10">
    <property type="entry name" value="EF-hand"/>
    <property type="match status" value="1"/>
</dbReference>
<dbReference type="InterPro" id="IPR003299">
    <property type="entry name" value="Calflagin-bd"/>
</dbReference>
<dbReference type="InterPro" id="IPR011992">
    <property type="entry name" value="EF-hand-dom_pair"/>
</dbReference>
<dbReference type="InterPro" id="IPR018247">
    <property type="entry name" value="EF_Hand_1_Ca_BS"/>
</dbReference>
<dbReference type="InterPro" id="IPR002048">
    <property type="entry name" value="EF_hand_dom"/>
</dbReference>
<dbReference type="InterPro" id="IPR054322">
    <property type="entry name" value="FCABP_EF-hand"/>
</dbReference>
<dbReference type="Pfam" id="PF13499">
    <property type="entry name" value="EF-hand_7"/>
    <property type="match status" value="1"/>
</dbReference>
<dbReference type="Pfam" id="PF22592">
    <property type="entry name" value="FCaBP_EF-hand"/>
    <property type="match status" value="1"/>
</dbReference>
<dbReference type="PRINTS" id="PR01362">
    <property type="entry name" value="CALFLAGIN"/>
</dbReference>
<dbReference type="SMART" id="SM00054">
    <property type="entry name" value="EFh"/>
    <property type="match status" value="3"/>
</dbReference>
<dbReference type="SUPFAM" id="SSF47473">
    <property type="entry name" value="EF-hand"/>
    <property type="match status" value="1"/>
</dbReference>
<dbReference type="PROSITE" id="PS00018">
    <property type="entry name" value="EF_HAND_1"/>
    <property type="match status" value="2"/>
</dbReference>
<dbReference type="PROSITE" id="PS50222">
    <property type="entry name" value="EF_HAND_2"/>
    <property type="match status" value="3"/>
</dbReference>
<reference key="1">
    <citation type="journal article" date="1985" name="Nucleic Acids Res.">
        <title>Apparent generation of a segmented mRNA from two separate tandem gene families in Trypanosoma cruzi.</title>
        <authorList>
            <person name="Gonzalez A."/>
            <person name="Lerner T.J."/>
            <person name="Huecas M."/>
            <person name="Sosa-Pineda B."/>
            <person name="Nogueira N."/>
            <person name="Lizardi P.M."/>
        </authorList>
    </citation>
    <scope>NUCLEOTIDE SEQUENCE [GENOMIC DNA]</scope>
    <source>
        <strain>Y</strain>
    </source>
</reference>
<reference key="2">
    <citation type="journal article" date="1989" name="J. Biol. Chem.">
        <title>A novel flagellar Ca2+-binding protein in trypanosomes.</title>
        <authorList>
            <person name="Engman D.M."/>
            <person name="Krause K.-H."/>
            <person name="Blumin J.H."/>
            <person name="Kim K.S."/>
            <person name="Kirchhoff L.V."/>
            <person name="Donelson J.E."/>
        </authorList>
    </citation>
    <scope>NUCLEOTIDE SEQUENCE</scope>
    <scope>CALCIUM-BINDING</scope>
</reference>
<reference key="3">
    <citation type="journal article" date="1992" name="Biol. Cell">
        <title>Cloning and sequencing of a 24-kDa Trypanosoma cruzi specific antigen released in association with membrane vesicles and defined by a monoclonal antibody.</title>
        <authorList>
            <person name="Ouaissi A."/>
            <person name="Aguirre T."/>
            <person name="Plumas-Marty B."/>
            <person name="Piras M."/>
            <person name="Schoneck R."/>
            <person name="Gras-Masse H."/>
            <person name="Taibi A."/>
            <person name="Loyens M."/>
            <person name="Tartar A."/>
            <person name="Capron A."/>
            <person name="Piras R."/>
        </authorList>
    </citation>
    <scope>NUCLEOTIDE SEQUENCE [MRNA]</scope>
    <scope>VARIANT ASN-23</scope>
    <source>
        <strain>Y</strain>
    </source>
</reference>
<reference key="4">
    <citation type="journal article" date="1996" name="Exp. Parasitol.">
        <title>Trypanosoma rangeli and Trypanosoma cruzi: molecular characterization of genes encoding putative calcium-binding proteins, highly conserved in trypanosomatids.</title>
        <authorList>
            <person name="Porcel B.M."/>
            <person name="Bontempi E.J."/>
            <person name="Henriksson J."/>
            <person name="Rydaaker M."/>
            <person name="Aaslund L."/>
            <person name="Segura E.L."/>
            <person name="Pettersson U."/>
            <person name="Ruiz A.M."/>
        </authorList>
    </citation>
    <scope>NUCLEOTIDE SEQUENCE [GENOMIC DNA / MRNA]</scope>
    <source>
        <strain>Miranda</strain>
    </source>
</reference>
<reference key="5">
    <citation type="journal article" date="1995" name="J. Eukaryot. Microbiol.">
        <title>Comparison of the 24 kDa flagellar calcium-binding protein cDNA of two strains of Trypanosoma cruzi.</title>
        <authorList>
            <person name="Godsel L.M."/>
            <person name="Olson C.L."/>
            <person name="Lacava Z.G.M."/>
            <person name="Engman D.M."/>
        </authorList>
    </citation>
    <scope>NUCLEOTIDE SEQUENCE [MRNA]</scope>
    <source>
        <strain>PBOL</strain>
    </source>
</reference>
<reference key="6">
    <citation type="submission" date="1996-09" db="EMBL/GenBank/DDBJ databases">
        <authorList>
            <person name="Tanaka M."/>
            <person name="Tanaka T."/>
            <person name="Mitsui Y."/>
            <person name="Yamamoto M."/>
            <person name="Wood J.N."/>
        </authorList>
    </citation>
    <scope>NUCLEOTIDE SEQUENCE [MRNA]</scope>
    <scope>VARIANTS ASN-23 AND PHE-152</scope>
    <source>
        <strain>Y</strain>
    </source>
</reference>
<reference key="7">
    <citation type="submission" date="1996-09" db="EMBL/GenBank/DDBJ databases">
        <authorList>
            <person name="Maldonado R.A."/>
            <person name="Linss J."/>
            <person name="Thomaz N."/>
            <person name="Olson C.L."/>
            <person name="Engman D.M."/>
            <person name="Goldenberg S."/>
        </authorList>
    </citation>
    <scope>NUCLEOTIDE SEQUENCE</scope>
    <source>
        <strain>DM28C</strain>
    </source>
</reference>
<protein>
    <recommendedName>
        <fullName>Flagellar calcium-binding protein</fullName>
        <shortName>FCABP</shortName>
    </recommendedName>
    <alternativeName>
        <fullName>1F8 protein</fullName>
    </alternativeName>
    <alternativeName>
        <fullName>24 kDa antigen</fullName>
    </alternativeName>
    <alternativeName>
        <fullName>29 kDa flagella protein</fullName>
    </alternativeName>
    <alternativeName>
        <fullName>ALC-1 antigen</fullName>
    </alternativeName>
    <alternativeName>
        <fullName>F29</fullName>
    </alternativeName>
    <alternativeName>
        <fullName>P24</fullName>
    </alternativeName>
</protein>
<gene>
    <name type="primary">FCABP</name>
</gene>
<evidence type="ECO:0000255" key="1">
    <source>
        <dbReference type="PROSITE-ProRule" id="PRU00448"/>
    </source>
</evidence>
<evidence type="ECO:0000256" key="2">
    <source>
        <dbReference type="SAM" id="MobiDB-lite"/>
    </source>
</evidence>
<evidence type="ECO:0000269" key="3">
    <source>
    </source>
</evidence>
<evidence type="ECO:0000269" key="4">
    <source ref="6"/>
</evidence>
<evidence type="ECO:0000305" key="5"/>
<evidence type="ECO:0007829" key="6">
    <source>
        <dbReference type="PDB" id="3CS1"/>
    </source>
</evidence>
<proteinExistence type="evidence at protein level"/>
<sequence>MGACGSKGSTSDKGLASDKDGKKAKDRKEAWERIRQAIPREKTAEAKQRRIELFKKFDKNETGKLCYDEVHSGCLEVLKLDEFTPRVRDITKRAFDKARALGSKLENKGSEDFVEFLEFRLMLCYIYDFFELTVMFDEIDASGNMLVDEEELKRAVPKLEAWGAKVEDPAALFKELDKNGTGSVTFDEFAAWASAVKLDADGDPDNVPESA</sequence>
<keyword id="KW-0002">3D-structure</keyword>
<keyword id="KW-0106">Calcium</keyword>
<keyword id="KW-0966">Cell projection</keyword>
<keyword id="KW-0969">Cilium</keyword>
<keyword id="KW-0282">Flagellum</keyword>
<keyword id="KW-0479">Metal-binding</keyword>
<keyword id="KW-0677">Repeat</keyword>
<accession>P07749</accession>
<accession>Q26256</accession>
<accession>Q26915</accession>
<accession>Q27055</accession>
<accession>Q94786</accession>
<accession>Q94797</accession>
<organism>
    <name type="scientific">Trypanosoma cruzi</name>
    <dbReference type="NCBI Taxonomy" id="5693"/>
    <lineage>
        <taxon>Eukaryota</taxon>
        <taxon>Discoba</taxon>
        <taxon>Euglenozoa</taxon>
        <taxon>Kinetoplastea</taxon>
        <taxon>Metakinetoplastina</taxon>
        <taxon>Trypanosomatida</taxon>
        <taxon>Trypanosomatidae</taxon>
        <taxon>Trypanosoma</taxon>
        <taxon>Schizotrypanum</taxon>
    </lineage>
</organism>
<name>FCA1_TRYCR</name>